<comment type="function">
    <text evidence="1">Catalyzes the methylthiolation of an aspartic acid residue of ribosomal protein uS12.</text>
</comment>
<comment type="catalytic activity">
    <reaction evidence="1">
        <text>L-aspartate(89)-[ribosomal protein uS12]-hydrogen + (sulfur carrier)-SH + AH2 + 2 S-adenosyl-L-methionine = 3-methylsulfanyl-L-aspartate(89)-[ribosomal protein uS12]-hydrogen + (sulfur carrier)-H + 5'-deoxyadenosine + L-methionine + A + S-adenosyl-L-homocysteine + 2 H(+)</text>
        <dbReference type="Rhea" id="RHEA:37087"/>
        <dbReference type="Rhea" id="RHEA-COMP:10460"/>
        <dbReference type="Rhea" id="RHEA-COMP:10461"/>
        <dbReference type="Rhea" id="RHEA-COMP:14737"/>
        <dbReference type="Rhea" id="RHEA-COMP:14739"/>
        <dbReference type="ChEBI" id="CHEBI:13193"/>
        <dbReference type="ChEBI" id="CHEBI:15378"/>
        <dbReference type="ChEBI" id="CHEBI:17319"/>
        <dbReference type="ChEBI" id="CHEBI:17499"/>
        <dbReference type="ChEBI" id="CHEBI:29917"/>
        <dbReference type="ChEBI" id="CHEBI:29961"/>
        <dbReference type="ChEBI" id="CHEBI:57844"/>
        <dbReference type="ChEBI" id="CHEBI:57856"/>
        <dbReference type="ChEBI" id="CHEBI:59789"/>
        <dbReference type="ChEBI" id="CHEBI:64428"/>
        <dbReference type="ChEBI" id="CHEBI:73599"/>
        <dbReference type="EC" id="2.8.4.4"/>
    </reaction>
</comment>
<comment type="cofactor">
    <cofactor evidence="1">
        <name>[4Fe-4S] cluster</name>
        <dbReference type="ChEBI" id="CHEBI:49883"/>
    </cofactor>
    <text evidence="1">Binds 2 [4Fe-4S] clusters. One cluster is coordinated with 3 cysteines and an exchangeable S-adenosyl-L-methionine.</text>
</comment>
<comment type="subcellular location">
    <subcellularLocation>
        <location evidence="1">Cytoplasm</location>
    </subcellularLocation>
</comment>
<comment type="similarity">
    <text evidence="1">Belongs to the methylthiotransferase family. RimO subfamily.</text>
</comment>
<gene>
    <name evidence="1" type="primary">rimO</name>
    <name type="ordered locus">XAC2735</name>
</gene>
<reference key="1">
    <citation type="journal article" date="2002" name="Nature">
        <title>Comparison of the genomes of two Xanthomonas pathogens with differing host specificities.</title>
        <authorList>
            <person name="da Silva A.C.R."/>
            <person name="Ferro J.A."/>
            <person name="Reinach F.C."/>
            <person name="Farah C.S."/>
            <person name="Furlan L.R."/>
            <person name="Quaggio R.B."/>
            <person name="Monteiro-Vitorello C.B."/>
            <person name="Van Sluys M.A."/>
            <person name="Almeida N.F. Jr."/>
            <person name="Alves L.M.C."/>
            <person name="do Amaral A.M."/>
            <person name="Bertolini M.C."/>
            <person name="Camargo L.E.A."/>
            <person name="Camarotte G."/>
            <person name="Cannavan F."/>
            <person name="Cardozo J."/>
            <person name="Chambergo F."/>
            <person name="Ciapina L.P."/>
            <person name="Cicarelli R.M.B."/>
            <person name="Coutinho L.L."/>
            <person name="Cursino-Santos J.R."/>
            <person name="El-Dorry H."/>
            <person name="Faria J.B."/>
            <person name="Ferreira A.J.S."/>
            <person name="Ferreira R.C.C."/>
            <person name="Ferro M.I.T."/>
            <person name="Formighieri E.F."/>
            <person name="Franco M.C."/>
            <person name="Greggio C.C."/>
            <person name="Gruber A."/>
            <person name="Katsuyama A.M."/>
            <person name="Kishi L.T."/>
            <person name="Leite R.P."/>
            <person name="Lemos E.G.M."/>
            <person name="Lemos M.V.F."/>
            <person name="Locali E.C."/>
            <person name="Machado M.A."/>
            <person name="Madeira A.M.B.N."/>
            <person name="Martinez-Rossi N.M."/>
            <person name="Martins E.C."/>
            <person name="Meidanis J."/>
            <person name="Menck C.F.M."/>
            <person name="Miyaki C.Y."/>
            <person name="Moon D.H."/>
            <person name="Moreira L.M."/>
            <person name="Novo M.T.M."/>
            <person name="Okura V.K."/>
            <person name="Oliveira M.C."/>
            <person name="Oliveira V.R."/>
            <person name="Pereira H.A."/>
            <person name="Rossi A."/>
            <person name="Sena J.A.D."/>
            <person name="Silva C."/>
            <person name="de Souza R.F."/>
            <person name="Spinola L.A.F."/>
            <person name="Takita M.A."/>
            <person name="Tamura R.E."/>
            <person name="Teixeira E.C."/>
            <person name="Tezza R.I.D."/>
            <person name="Trindade dos Santos M."/>
            <person name="Truffi D."/>
            <person name="Tsai S.M."/>
            <person name="White F.F."/>
            <person name="Setubal J.C."/>
            <person name="Kitajima J.P."/>
        </authorList>
    </citation>
    <scope>NUCLEOTIDE SEQUENCE [LARGE SCALE GENOMIC DNA]</scope>
    <source>
        <strain>306</strain>
    </source>
</reference>
<feature type="chain" id="PRO_0000375069" description="Ribosomal protein uS12 methylthiotransferase RimO">
    <location>
        <begin position="1"/>
        <end position="457"/>
    </location>
</feature>
<feature type="domain" description="MTTase N-terminal" evidence="1">
    <location>
        <begin position="6"/>
        <end position="116"/>
    </location>
</feature>
<feature type="domain" description="Radical SAM core" evidence="2">
    <location>
        <begin position="133"/>
        <end position="371"/>
    </location>
</feature>
<feature type="domain" description="TRAM" evidence="1">
    <location>
        <begin position="373"/>
        <end position="441"/>
    </location>
</feature>
<feature type="binding site" evidence="1">
    <location>
        <position position="15"/>
    </location>
    <ligand>
        <name>[4Fe-4S] cluster</name>
        <dbReference type="ChEBI" id="CHEBI:49883"/>
        <label>1</label>
    </ligand>
</feature>
<feature type="binding site" evidence="1">
    <location>
        <position position="51"/>
    </location>
    <ligand>
        <name>[4Fe-4S] cluster</name>
        <dbReference type="ChEBI" id="CHEBI:49883"/>
        <label>1</label>
    </ligand>
</feature>
<feature type="binding site" evidence="1">
    <location>
        <position position="80"/>
    </location>
    <ligand>
        <name>[4Fe-4S] cluster</name>
        <dbReference type="ChEBI" id="CHEBI:49883"/>
        <label>1</label>
    </ligand>
</feature>
<feature type="binding site" evidence="1">
    <location>
        <position position="147"/>
    </location>
    <ligand>
        <name>[4Fe-4S] cluster</name>
        <dbReference type="ChEBI" id="CHEBI:49883"/>
        <label>2</label>
        <note>4Fe-4S-S-AdoMet</note>
    </ligand>
</feature>
<feature type="binding site" evidence="1">
    <location>
        <position position="151"/>
    </location>
    <ligand>
        <name>[4Fe-4S] cluster</name>
        <dbReference type="ChEBI" id="CHEBI:49883"/>
        <label>2</label>
        <note>4Fe-4S-S-AdoMet</note>
    </ligand>
</feature>
<feature type="binding site" evidence="1">
    <location>
        <position position="154"/>
    </location>
    <ligand>
        <name>[4Fe-4S] cluster</name>
        <dbReference type="ChEBI" id="CHEBI:49883"/>
        <label>2</label>
        <note>4Fe-4S-S-AdoMet</note>
    </ligand>
</feature>
<sequence>MSQLNPKVGFVSLGCPKALVDSERILTQLRVEGYDIVPSYDAADVVVVNTCGFIDSAVTESLDAIGEAMNANGKVIVTGCLGKRPEQIREAYPQVLAVSGPQDYQSVMEAVHAALPPRHDPFVDLVPDYGIKLTPRHYAYLKISEGCNHRCSFCIIPSMRGDLVSRPVDEVLREAERLVRGGVKELLVVSQDTSAYGVDLKYAERPWRDRLYQTRMKALCEGLSELGVWTRLHYVYPYPHVDDVIGLMAEGKLLPYLDIPFQHASPRILKLMKRPGAVEKTLERVQRWKAMCPEITVRSTFIVGFPGETDAEFESLLDFLDQAQLDRVGAFAYSPVDGASANALPDQVPEEVKQERLARFMAKQAQISALRLESKIGSVQQCLVDVIEDDIAVARSRADAPEIDGLVHIQNGGELGLKVGDLVDVEITDSDEHDLFGDALPSGHAVQPGRTLNLQIV</sequence>
<proteinExistence type="inferred from homology"/>
<accession>Q8PJ10</accession>
<name>RIMO_XANAC</name>
<organism>
    <name type="scientific">Xanthomonas axonopodis pv. citri (strain 306)</name>
    <dbReference type="NCBI Taxonomy" id="190486"/>
    <lineage>
        <taxon>Bacteria</taxon>
        <taxon>Pseudomonadati</taxon>
        <taxon>Pseudomonadota</taxon>
        <taxon>Gammaproteobacteria</taxon>
        <taxon>Lysobacterales</taxon>
        <taxon>Lysobacteraceae</taxon>
        <taxon>Xanthomonas</taxon>
    </lineage>
</organism>
<evidence type="ECO:0000255" key="1">
    <source>
        <dbReference type="HAMAP-Rule" id="MF_01865"/>
    </source>
</evidence>
<evidence type="ECO:0000255" key="2">
    <source>
        <dbReference type="PROSITE-ProRule" id="PRU01266"/>
    </source>
</evidence>
<keyword id="KW-0004">4Fe-4S</keyword>
<keyword id="KW-0963">Cytoplasm</keyword>
<keyword id="KW-0408">Iron</keyword>
<keyword id="KW-0411">Iron-sulfur</keyword>
<keyword id="KW-0479">Metal-binding</keyword>
<keyword id="KW-0949">S-adenosyl-L-methionine</keyword>
<keyword id="KW-0808">Transferase</keyword>
<protein>
    <recommendedName>
        <fullName evidence="1">Ribosomal protein uS12 methylthiotransferase RimO</fullName>
        <shortName evidence="1">uS12 MTTase</shortName>
        <shortName evidence="1">uS12 methylthiotransferase</shortName>
        <ecNumber evidence="1">2.8.4.4</ecNumber>
    </recommendedName>
    <alternativeName>
        <fullName evidence="1">Ribosomal protein uS12 (aspartate-C(3))-methylthiotransferase</fullName>
    </alternativeName>
    <alternativeName>
        <fullName evidence="1">Ribosome maturation factor RimO</fullName>
    </alternativeName>
</protein>
<dbReference type="EC" id="2.8.4.4" evidence="1"/>
<dbReference type="EMBL" id="AE008923">
    <property type="protein sequence ID" value="AAM37580.1"/>
    <property type="molecule type" value="Genomic_DNA"/>
</dbReference>
<dbReference type="RefSeq" id="WP_011051794.1">
    <property type="nucleotide sequence ID" value="NC_003919.1"/>
</dbReference>
<dbReference type="SMR" id="Q8PJ10"/>
<dbReference type="GeneID" id="66911825"/>
<dbReference type="KEGG" id="xac:XAC2735"/>
<dbReference type="eggNOG" id="COG0621">
    <property type="taxonomic scope" value="Bacteria"/>
</dbReference>
<dbReference type="HOGENOM" id="CLU_018697_0_0_6"/>
<dbReference type="Proteomes" id="UP000000576">
    <property type="component" value="Chromosome"/>
</dbReference>
<dbReference type="GO" id="GO:0005829">
    <property type="term" value="C:cytosol"/>
    <property type="evidence" value="ECO:0007669"/>
    <property type="project" value="TreeGrafter"/>
</dbReference>
<dbReference type="GO" id="GO:0051539">
    <property type="term" value="F:4 iron, 4 sulfur cluster binding"/>
    <property type="evidence" value="ECO:0007669"/>
    <property type="project" value="UniProtKB-UniRule"/>
</dbReference>
<dbReference type="GO" id="GO:0035599">
    <property type="term" value="F:aspartic acid methylthiotransferase activity"/>
    <property type="evidence" value="ECO:0007669"/>
    <property type="project" value="TreeGrafter"/>
</dbReference>
<dbReference type="GO" id="GO:0046872">
    <property type="term" value="F:metal ion binding"/>
    <property type="evidence" value="ECO:0007669"/>
    <property type="project" value="UniProtKB-KW"/>
</dbReference>
<dbReference type="GO" id="GO:0103039">
    <property type="term" value="F:protein methylthiotransferase activity"/>
    <property type="evidence" value="ECO:0007669"/>
    <property type="project" value="UniProtKB-EC"/>
</dbReference>
<dbReference type="GO" id="GO:0006400">
    <property type="term" value="P:tRNA modification"/>
    <property type="evidence" value="ECO:0007669"/>
    <property type="project" value="InterPro"/>
</dbReference>
<dbReference type="CDD" id="cd01335">
    <property type="entry name" value="Radical_SAM"/>
    <property type="match status" value="1"/>
</dbReference>
<dbReference type="FunFam" id="2.40.50.140:FF:000210">
    <property type="entry name" value="Ribosomal protein S12 methylthiotransferase RimO"/>
    <property type="match status" value="1"/>
</dbReference>
<dbReference type="FunFam" id="3.40.50.12160:FF:000002">
    <property type="entry name" value="Ribosomal protein S12 methylthiotransferase RimO"/>
    <property type="match status" value="1"/>
</dbReference>
<dbReference type="FunFam" id="3.80.30.20:FF:000001">
    <property type="entry name" value="tRNA-2-methylthio-N(6)-dimethylallyladenosine synthase 2"/>
    <property type="match status" value="1"/>
</dbReference>
<dbReference type="Gene3D" id="3.40.50.12160">
    <property type="entry name" value="Methylthiotransferase, N-terminal domain"/>
    <property type="match status" value="1"/>
</dbReference>
<dbReference type="Gene3D" id="2.40.50.140">
    <property type="entry name" value="Nucleic acid-binding proteins"/>
    <property type="match status" value="1"/>
</dbReference>
<dbReference type="Gene3D" id="3.80.30.20">
    <property type="entry name" value="tm_1862 like domain"/>
    <property type="match status" value="1"/>
</dbReference>
<dbReference type="HAMAP" id="MF_01865">
    <property type="entry name" value="MTTase_RimO"/>
    <property type="match status" value="1"/>
</dbReference>
<dbReference type="InterPro" id="IPR006638">
    <property type="entry name" value="Elp3/MiaA/NifB-like_rSAM"/>
</dbReference>
<dbReference type="InterPro" id="IPR005839">
    <property type="entry name" value="Methylthiotransferase"/>
</dbReference>
<dbReference type="InterPro" id="IPR020612">
    <property type="entry name" value="Methylthiotransferase_CS"/>
</dbReference>
<dbReference type="InterPro" id="IPR013848">
    <property type="entry name" value="Methylthiotransferase_N"/>
</dbReference>
<dbReference type="InterPro" id="IPR038135">
    <property type="entry name" value="Methylthiotransferase_N_sf"/>
</dbReference>
<dbReference type="InterPro" id="IPR012340">
    <property type="entry name" value="NA-bd_OB-fold"/>
</dbReference>
<dbReference type="InterPro" id="IPR005840">
    <property type="entry name" value="Ribosomal_uS12_MeSTrfase_RimO"/>
</dbReference>
<dbReference type="InterPro" id="IPR007197">
    <property type="entry name" value="rSAM"/>
</dbReference>
<dbReference type="InterPro" id="IPR023404">
    <property type="entry name" value="rSAM_horseshoe"/>
</dbReference>
<dbReference type="InterPro" id="IPR002792">
    <property type="entry name" value="TRAM_dom"/>
</dbReference>
<dbReference type="NCBIfam" id="TIGR01125">
    <property type="entry name" value="30S ribosomal protein S12 methylthiotransferase RimO"/>
    <property type="match status" value="1"/>
</dbReference>
<dbReference type="NCBIfam" id="TIGR00089">
    <property type="entry name" value="MiaB/RimO family radical SAM methylthiotransferase"/>
    <property type="match status" value="1"/>
</dbReference>
<dbReference type="PANTHER" id="PTHR43837">
    <property type="entry name" value="RIBOSOMAL PROTEIN S12 METHYLTHIOTRANSFERASE RIMO"/>
    <property type="match status" value="1"/>
</dbReference>
<dbReference type="PANTHER" id="PTHR43837:SF1">
    <property type="entry name" value="RIBOSOMAL PROTEIN US12 METHYLTHIOTRANSFERASE RIMO"/>
    <property type="match status" value="1"/>
</dbReference>
<dbReference type="Pfam" id="PF04055">
    <property type="entry name" value="Radical_SAM"/>
    <property type="match status" value="1"/>
</dbReference>
<dbReference type="Pfam" id="PF18693">
    <property type="entry name" value="TRAM_2"/>
    <property type="match status" value="1"/>
</dbReference>
<dbReference type="Pfam" id="PF00919">
    <property type="entry name" value="UPF0004"/>
    <property type="match status" value="1"/>
</dbReference>
<dbReference type="SFLD" id="SFLDG01082">
    <property type="entry name" value="B12-binding_domain_containing"/>
    <property type="match status" value="1"/>
</dbReference>
<dbReference type="SFLD" id="SFLDG01061">
    <property type="entry name" value="methylthiotransferase"/>
    <property type="match status" value="1"/>
</dbReference>
<dbReference type="SFLD" id="SFLDF00274">
    <property type="entry name" value="ribosomal_protein_S12_methylth"/>
    <property type="match status" value="1"/>
</dbReference>
<dbReference type="SMART" id="SM00729">
    <property type="entry name" value="Elp3"/>
    <property type="match status" value="1"/>
</dbReference>
<dbReference type="SUPFAM" id="SSF102114">
    <property type="entry name" value="Radical SAM enzymes"/>
    <property type="match status" value="1"/>
</dbReference>
<dbReference type="PROSITE" id="PS51449">
    <property type="entry name" value="MTTASE_N"/>
    <property type="match status" value="1"/>
</dbReference>
<dbReference type="PROSITE" id="PS01278">
    <property type="entry name" value="MTTASE_RADICAL"/>
    <property type="match status" value="1"/>
</dbReference>
<dbReference type="PROSITE" id="PS51918">
    <property type="entry name" value="RADICAL_SAM"/>
    <property type="match status" value="1"/>
</dbReference>
<dbReference type="PROSITE" id="PS50926">
    <property type="entry name" value="TRAM"/>
    <property type="match status" value="1"/>
</dbReference>